<protein>
    <recommendedName>
        <fullName evidence="5">Protein NIM1-INTERACTING 2</fullName>
        <shortName evidence="5">Protein NIMIN-2</shortName>
    </recommendedName>
</protein>
<keyword id="KW-0539">Nucleus</keyword>
<keyword id="KW-1185">Reference proteome</keyword>
<gene>
    <name evidence="5" type="primary">NIMIN-2</name>
    <name evidence="7" type="ordered locus">At3g25882</name>
    <name evidence="8" type="ORF">MPE11.4</name>
</gene>
<name>NIMI2_ARATH</name>
<organism>
    <name type="scientific">Arabidopsis thaliana</name>
    <name type="common">Mouse-ear cress</name>
    <dbReference type="NCBI Taxonomy" id="3702"/>
    <lineage>
        <taxon>Eukaryota</taxon>
        <taxon>Viridiplantae</taxon>
        <taxon>Streptophyta</taxon>
        <taxon>Embryophyta</taxon>
        <taxon>Tracheophyta</taxon>
        <taxon>Spermatophyta</taxon>
        <taxon>Magnoliopsida</taxon>
        <taxon>eudicotyledons</taxon>
        <taxon>Gunneridae</taxon>
        <taxon>Pentapetalae</taxon>
        <taxon>rosids</taxon>
        <taxon>malvids</taxon>
        <taxon>Brassicales</taxon>
        <taxon>Brassicaceae</taxon>
        <taxon>Camelineae</taxon>
        <taxon>Arabidopsis</taxon>
    </lineage>
</organism>
<dbReference type="EMBL" id="AJ250185">
    <property type="protein sequence ID" value="CAC19845.1"/>
    <property type="molecule type" value="mRNA"/>
</dbReference>
<dbReference type="EMBL" id="AB023041">
    <property type="protein sequence ID" value="BAB01050.1"/>
    <property type="molecule type" value="Genomic_DNA"/>
</dbReference>
<dbReference type="EMBL" id="CP002686">
    <property type="protein sequence ID" value="AEE77083.1"/>
    <property type="molecule type" value="Genomic_DNA"/>
</dbReference>
<dbReference type="EMBL" id="AK175239">
    <property type="protein sequence ID" value="BAD43002.1"/>
    <property type="molecule type" value="mRNA"/>
</dbReference>
<dbReference type="EMBL" id="BT026085">
    <property type="protein sequence ID" value="ABG48441.1"/>
    <property type="molecule type" value="mRNA"/>
</dbReference>
<dbReference type="RefSeq" id="NP_683594.1">
    <property type="nucleotide sequence ID" value="NM_148752.3"/>
</dbReference>
<dbReference type="SMR" id="Q9LUA3"/>
<dbReference type="BioGRID" id="7515">
    <property type="interactions" value="16"/>
</dbReference>
<dbReference type="FunCoup" id="Q9LUA3">
    <property type="interactions" value="1"/>
</dbReference>
<dbReference type="IntAct" id="Q9LUA3">
    <property type="interactions" value="17"/>
</dbReference>
<dbReference type="STRING" id="3702.Q9LUA3"/>
<dbReference type="PaxDb" id="3702-AT3G25882.1"/>
<dbReference type="ProteomicsDB" id="249392"/>
<dbReference type="EnsemblPlants" id="AT3G25882.1">
    <property type="protein sequence ID" value="AT3G25882.1"/>
    <property type="gene ID" value="AT3G25882"/>
</dbReference>
<dbReference type="GeneID" id="822184"/>
<dbReference type="Gramene" id="AT3G25882.1">
    <property type="protein sequence ID" value="AT3G25882.1"/>
    <property type="gene ID" value="AT3G25882"/>
</dbReference>
<dbReference type="KEGG" id="ath:AT3G25882"/>
<dbReference type="Araport" id="AT3G25882"/>
<dbReference type="TAIR" id="AT3G25882">
    <property type="gene designation" value="NIMIN-2"/>
</dbReference>
<dbReference type="eggNOG" id="ENOG502S7VG">
    <property type="taxonomic scope" value="Eukaryota"/>
</dbReference>
<dbReference type="HOGENOM" id="CLU_132870_1_0_1"/>
<dbReference type="InParanoid" id="Q9LUA3"/>
<dbReference type="OMA" id="CLYSKVH"/>
<dbReference type="PRO" id="PR:Q9LUA3"/>
<dbReference type="Proteomes" id="UP000006548">
    <property type="component" value="Chromosome 3"/>
</dbReference>
<dbReference type="ExpressionAtlas" id="Q9LUA3">
    <property type="expression patterns" value="baseline and differential"/>
</dbReference>
<dbReference type="GO" id="GO:0005634">
    <property type="term" value="C:nucleus"/>
    <property type="evidence" value="ECO:0007669"/>
    <property type="project" value="UniProtKB-SubCell"/>
</dbReference>
<dbReference type="GO" id="GO:0010112">
    <property type="term" value="P:regulation of systemic acquired resistance"/>
    <property type="evidence" value="ECO:0007669"/>
    <property type="project" value="InterPro"/>
</dbReference>
<dbReference type="InterPro" id="IPR034577">
    <property type="entry name" value="NIMIN-2"/>
</dbReference>
<dbReference type="PANTHER" id="PTHR35735">
    <property type="entry name" value="PROTEIN NIM1-INTERACTING 2"/>
    <property type="match status" value="1"/>
</dbReference>
<dbReference type="PANTHER" id="PTHR35735:SF8">
    <property type="entry name" value="PROTEIN NIM1-INTERACTING 2"/>
    <property type="match status" value="1"/>
</dbReference>
<proteinExistence type="evidence at protein level"/>
<comment type="subunit">
    <text evidence="3 4">Interacts with NPR1 N-terminal region.</text>
</comment>
<comment type="interaction">
    <interactant intactId="EBI-541107">
        <id>Q9LUA3</id>
    </interactant>
    <interactant intactId="EBI-4434261">
        <id>Q9LNJ5</id>
        <label>BHLH13</label>
    </interactant>
    <organismsDiffer>false</organismsDiffer>
    <experiments>3</experiments>
</comment>
<comment type="interaction">
    <interactant intactId="EBI-541107">
        <id>Q9LUA3</id>
    </interactant>
    <interactant intactId="EBI-963606">
        <id>Q9LQT8</id>
        <label>GAI</label>
    </interactant>
    <organismsDiffer>false</organismsDiffer>
    <experiments>3</experiments>
</comment>
<comment type="interaction">
    <interactant intactId="EBI-541107">
        <id>Q9LUA3</id>
    </interactant>
    <interactant intactId="EBI-15197631">
        <id>Q9LK95</id>
        <label>MYB21</label>
    </interactant>
    <organismsDiffer>false</organismsDiffer>
    <experiments>3</experiments>
</comment>
<comment type="interaction">
    <interactant intactId="EBI-541107">
        <id>Q9LUA3</id>
    </interactant>
    <interactant intactId="EBI-15406909">
        <id>O49687</id>
        <label>MYC4</label>
    </interactant>
    <organismsDiffer>false</organismsDiffer>
    <experiments>3</experiments>
</comment>
<comment type="interaction">
    <interactant intactId="EBI-541107">
        <id>Q9LUA3</id>
    </interactant>
    <interactant intactId="EBI-1392127">
        <id>P93002</id>
        <label>NPR1</label>
    </interactant>
    <organismsDiffer>false</organismsDiffer>
    <experiments>5</experiments>
</comment>
<comment type="interaction">
    <interactant intactId="EBI-541107">
        <id>Q9LUA3</id>
    </interactant>
    <interactant intactId="EBI-541093">
        <id>Q8L9W4</id>
        <label>NPR1</label>
    </interactant>
    <organismsDiffer>false</organismsDiffer>
    <experiments>5</experiments>
</comment>
<comment type="interaction">
    <interactant intactId="EBI-541107">
        <id>Q9LUA3</id>
    </interactant>
    <interactant intactId="EBI-4441365">
        <id>Q8L746</id>
        <label>NPR3</label>
    </interactant>
    <organismsDiffer>false</organismsDiffer>
    <experiments>3</experiments>
</comment>
<comment type="interaction">
    <interactant intactId="EBI-541107">
        <id>Q9LUA3</id>
    </interactant>
    <interactant intactId="EBI-4424877">
        <id>Q9S7W5</id>
        <label>TCP13</label>
    </interactant>
    <organismsDiffer>false</organismsDiffer>
    <experiments>3</experiments>
</comment>
<comment type="interaction">
    <interactant intactId="EBI-541107">
        <id>Q9LUA3</id>
    </interactant>
    <interactant intactId="EBI-4426144">
        <id>Q9C9L2</id>
        <label>TCP15</label>
    </interactant>
    <organismsDiffer>false</organismsDiffer>
    <experiments>3</experiments>
</comment>
<comment type="interaction">
    <interactant intactId="EBI-541107">
        <id>Q9LUA3</id>
    </interactant>
    <interactant intactId="EBI-15198627">
        <id>Q9M1U4</id>
        <label>TCP16</label>
    </interactant>
    <organismsDiffer>false</organismsDiffer>
    <experiments>3</experiments>
</comment>
<comment type="interaction">
    <interactant intactId="EBI-541107">
        <id>Q9LUA3</id>
    </interactant>
    <interactant intactId="EBI-4426168">
        <id>Q9FTA2</id>
        <label>TCP21</label>
    </interactant>
    <organismsDiffer>false</organismsDiffer>
    <experiments>3</experiments>
</comment>
<comment type="interaction">
    <interactant intactId="EBI-541107">
        <id>Q9LUA3</id>
    </interactant>
    <interactant intactId="EBI-25522447">
        <id>Q9MAH8</id>
        <label>TCP3</label>
    </interactant>
    <organismsDiffer>false</organismsDiffer>
    <experiments>3</experiments>
</comment>
<comment type="subcellular location">
    <subcellularLocation>
        <location evidence="3">Nucleus</location>
    </subcellularLocation>
</comment>
<comment type="induction">
    <text evidence="3">By salicylic acid (SA) and BTH.</text>
</comment>
<evidence type="ECO:0000255" key="1"/>
<evidence type="ECO:0000256" key="2">
    <source>
        <dbReference type="SAM" id="MobiDB-lite"/>
    </source>
</evidence>
<evidence type="ECO:0000269" key="3">
    <source>
    </source>
</evidence>
<evidence type="ECO:0000269" key="4">
    <source>
    </source>
</evidence>
<evidence type="ECO:0000303" key="5">
    <source>
    </source>
</evidence>
<evidence type="ECO:0000305" key="6"/>
<evidence type="ECO:0000312" key="7">
    <source>
        <dbReference type="Araport" id="AT3G25882"/>
    </source>
</evidence>
<evidence type="ECO:0000312" key="8">
    <source>
        <dbReference type="EMBL" id="BAB01050.1"/>
    </source>
</evidence>
<reference key="1">
    <citation type="journal article" date="2001" name="Plant Mol. Biol.">
        <title>NIMIN-1, NIMIN-2 and NIMIN-3, members of a novel family of proteins from Arabidopsis that interact with NPR1/NIM1, a key regulator of systemic acquired resistance in plants.</title>
        <authorList>
            <person name="Weigel R.R."/>
            <person name="Baeuscher C."/>
            <person name="Pfitzner A.J.P."/>
            <person name="Pfitzner U.M."/>
        </authorList>
    </citation>
    <scope>NUCLEOTIDE SEQUENCE [MRNA]</scope>
    <scope>INTERACTION WITH NPR1</scope>
    <scope>INDUCTION</scope>
    <scope>SUBCELLULAR LOCATION</scope>
    <source>
        <strain>cv. Columbia</strain>
    </source>
</reference>
<reference key="2">
    <citation type="journal article" date="2000" name="DNA Res.">
        <title>Structural analysis of Arabidopsis thaliana chromosome 3. I. Sequence features of the regions of 4,504,864 bp covered by sixty P1 and TAC clones.</title>
        <authorList>
            <person name="Sato S."/>
            <person name="Nakamura Y."/>
            <person name="Kaneko T."/>
            <person name="Katoh T."/>
            <person name="Asamizu E."/>
            <person name="Tabata S."/>
        </authorList>
    </citation>
    <scope>NUCLEOTIDE SEQUENCE [LARGE SCALE GENOMIC DNA]</scope>
    <source>
        <strain>cv. Columbia</strain>
    </source>
</reference>
<reference key="3">
    <citation type="journal article" date="2017" name="Plant J.">
        <title>Araport11: a complete reannotation of the Arabidopsis thaliana reference genome.</title>
        <authorList>
            <person name="Cheng C.Y."/>
            <person name="Krishnakumar V."/>
            <person name="Chan A.P."/>
            <person name="Thibaud-Nissen F."/>
            <person name="Schobel S."/>
            <person name="Town C.D."/>
        </authorList>
    </citation>
    <scope>GENOME REANNOTATION</scope>
    <source>
        <strain>cv. Columbia</strain>
    </source>
</reference>
<reference key="4">
    <citation type="submission" date="2004-09" db="EMBL/GenBank/DDBJ databases">
        <title>Large-scale analysis of RIKEN Arabidopsis full-length (RAFL) cDNAs.</title>
        <authorList>
            <person name="Totoki Y."/>
            <person name="Seki M."/>
            <person name="Ishida J."/>
            <person name="Nakajima M."/>
            <person name="Enju A."/>
            <person name="Kamiya A."/>
            <person name="Narusaka M."/>
            <person name="Shin-i T."/>
            <person name="Nakagawa M."/>
            <person name="Sakamoto N."/>
            <person name="Oishi K."/>
            <person name="Kohara Y."/>
            <person name="Kobayashi M."/>
            <person name="Toyoda A."/>
            <person name="Sakaki Y."/>
            <person name="Sakurai T."/>
            <person name="Iida K."/>
            <person name="Akiyama K."/>
            <person name="Satou M."/>
            <person name="Toyoda T."/>
            <person name="Konagaya A."/>
            <person name="Carninci P."/>
            <person name="Kawai J."/>
            <person name="Hayashizaki Y."/>
            <person name="Shinozaki K."/>
        </authorList>
    </citation>
    <scope>NUCLEOTIDE SEQUENCE [LARGE SCALE MRNA]</scope>
    <source>
        <strain>cv. Columbia</strain>
    </source>
</reference>
<reference key="5">
    <citation type="submission" date="2006-07" db="EMBL/GenBank/DDBJ databases">
        <title>Arabidopsis ORF clones.</title>
        <authorList>
            <person name="Quinitio C."/>
            <person name="Chen H."/>
            <person name="Kim C.J."/>
            <person name="Shinn P."/>
            <person name="Ecker J.R."/>
        </authorList>
    </citation>
    <scope>NUCLEOTIDE SEQUENCE [LARGE SCALE MRNA]</scope>
    <source>
        <strain>cv. Columbia</strain>
    </source>
</reference>
<reference key="6">
    <citation type="journal article" date="2015" name="Cell Host Microbe">
        <title>Posttranslational modifications of the master transcriptional regulator NPR1 enable dynamic but tight control of plant immune responses.</title>
        <authorList>
            <person name="Saleh A."/>
            <person name="Withers J."/>
            <person name="Mohan R."/>
            <person name="Marques J."/>
            <person name="Gu Y."/>
            <person name="Yan S."/>
            <person name="Zavaliev R."/>
            <person name="Nomoto M."/>
            <person name="Tada Y."/>
            <person name="Dong X."/>
        </authorList>
    </citation>
    <scope>INTERACTION WITH NPR1</scope>
    <source>
        <strain>cv. Columbia</strain>
    </source>
</reference>
<feature type="chain" id="PRO_0000407997" description="Protein NIM1-INTERACTING 2">
    <location>
        <begin position="1"/>
        <end position="122"/>
    </location>
</feature>
<feature type="region of interest" description="Disordered" evidence="2">
    <location>
        <begin position="1"/>
        <end position="28"/>
    </location>
</feature>
<feature type="region of interest" description="Involved in NPR1/NIM1 interaction">
    <location>
        <begin position="39"/>
        <end position="45"/>
    </location>
</feature>
<feature type="short sequence motif" description="Nuclear localization signal" evidence="1">
    <location>
        <begin position="70"/>
        <end position="74"/>
    </location>
</feature>
<feature type="compositionally biased region" description="Basic and acidic residues" evidence="2">
    <location>
        <begin position="1"/>
        <end position="22"/>
    </location>
</feature>
<feature type="sequence conflict" description="In Ref. 4; BAD43002." evidence="6" ref="4">
    <original>P</original>
    <variation>T</variation>
    <location>
        <position position="113"/>
    </location>
</feature>
<accession>Q9LUA3</accession>
<accession>Q682X8</accession>
<sequence>MNNSLKKEERVEEDNGKSDGNRGKPSTEVVRTVTEEEVDEFFKILRRVHVATRTVAKVNGGVAEGELPSKKRKRSQNLGLRNSLDCNGVRDGEFDEINRVGLQGLGLDLNCKPEPDSVSLSL</sequence>